<proteinExistence type="evidence at protein level"/>
<feature type="chain" id="PRO_0000424477" description="Ferritin heavy chain">
    <location>
        <begin position="1"/>
        <end position="171"/>
    </location>
</feature>
<feature type="initiator methionine" description="Removed; alternate" evidence="1">
    <location>
        <position position="1"/>
    </location>
</feature>
<feature type="chain" id="PRO_0000201054" description="Ferritin heavy chain, N-terminally processed">
    <location>
        <begin position="2"/>
        <end position="171"/>
    </location>
</feature>
<feature type="domain" description="Ferritin-like diiron" evidence="4">
    <location>
        <begin position="11"/>
        <end position="160"/>
    </location>
</feature>
<feature type="binding site" evidence="4">
    <location>
        <position position="28"/>
    </location>
    <ligand>
        <name>Fe cation</name>
        <dbReference type="ChEBI" id="CHEBI:24875"/>
        <label>1</label>
    </ligand>
</feature>
<feature type="binding site" evidence="4">
    <location>
        <position position="63"/>
    </location>
    <ligand>
        <name>Fe cation</name>
        <dbReference type="ChEBI" id="CHEBI:24875"/>
        <label>1</label>
    </ligand>
</feature>
<feature type="binding site" evidence="4">
    <location>
        <position position="63"/>
    </location>
    <ligand>
        <name>Fe cation</name>
        <dbReference type="ChEBI" id="CHEBI:24875"/>
        <label>2</label>
    </ligand>
</feature>
<feature type="binding site" evidence="4">
    <location>
        <position position="66"/>
    </location>
    <ligand>
        <name>Fe cation</name>
        <dbReference type="ChEBI" id="CHEBI:24875"/>
        <label>1</label>
    </ligand>
</feature>
<feature type="binding site" evidence="4">
    <location>
        <position position="108"/>
    </location>
    <ligand>
        <name>Fe cation</name>
        <dbReference type="ChEBI" id="CHEBI:24875"/>
        <label>2</label>
    </ligand>
</feature>
<feature type="binding site" evidence="4">
    <location>
        <position position="142"/>
    </location>
    <ligand>
        <name>Fe cation</name>
        <dbReference type="ChEBI" id="CHEBI:24875"/>
        <label>2</label>
    </ligand>
</feature>
<feature type="modified residue" description="N-acetylmethionine" evidence="1">
    <location>
        <position position="1"/>
    </location>
</feature>
<feature type="modified residue" description="N-acetylthreonine; in Ferritin heavy chain, N-terminally processed" evidence="1">
    <location>
        <position position="2"/>
    </location>
</feature>
<feature type="sequence conflict" description="In Ref. 2; AA sequence." evidence="5" ref="2">
    <original>A</original>
    <variation>G</variation>
    <location>
        <position position="79"/>
    </location>
</feature>
<organism>
    <name type="scientific">Ovis aries</name>
    <name type="common">Sheep</name>
    <dbReference type="NCBI Taxonomy" id="9940"/>
    <lineage>
        <taxon>Eukaryota</taxon>
        <taxon>Metazoa</taxon>
        <taxon>Chordata</taxon>
        <taxon>Craniata</taxon>
        <taxon>Vertebrata</taxon>
        <taxon>Euteleostomi</taxon>
        <taxon>Mammalia</taxon>
        <taxon>Eutheria</taxon>
        <taxon>Laurasiatheria</taxon>
        <taxon>Artiodactyla</taxon>
        <taxon>Ruminantia</taxon>
        <taxon>Pecora</taxon>
        <taxon>Bovidae</taxon>
        <taxon>Caprinae</taxon>
        <taxon>Ovis</taxon>
    </lineage>
</organism>
<protein>
    <recommendedName>
        <fullName>Ferritin heavy chain</fullName>
        <shortName>Ferritin H subunit</shortName>
        <ecNumber evidence="1">1.16.3.1</ecNumber>
    </recommendedName>
    <component>
        <recommendedName>
            <fullName>Ferritin heavy chain, N-terminally processed</fullName>
        </recommendedName>
    </component>
</protein>
<name>FRIH_SHEEP</name>
<keyword id="KW-0007">Acetylation</keyword>
<keyword id="KW-0963">Cytoplasm</keyword>
<keyword id="KW-0968">Cytoplasmic vesicle</keyword>
<keyword id="KW-0903">Direct protein sequencing</keyword>
<keyword id="KW-0408">Iron</keyword>
<keyword id="KW-0409">Iron storage</keyword>
<keyword id="KW-0458">Lysosome</keyword>
<keyword id="KW-0479">Metal-binding</keyword>
<keyword id="KW-0560">Oxidoreductase</keyword>
<keyword id="KW-1185">Reference proteome</keyword>
<gene>
    <name type="primary">FTH1</name>
    <name type="synonym">FTH</name>
</gene>
<comment type="function">
    <text evidence="1 2">Stores iron in a soluble, non-toxic, readily available form (By similarity). Important for iron homeostasis (By similarity). Has ferroxidase activity (By similarity). Iron is taken up in the ferrous form and deposited as ferric hydroxides after oxidation (By similarity). Also plays a role in delivery of iron to cells (By similarity). Mediates iron uptake in capsule cells of the developing kidney (By similarity). Delivery to lysosomes is mediated by the cargo receptor NCOA4 for autophagic degradation and release of iron (By similarity).</text>
</comment>
<comment type="catalytic activity">
    <reaction evidence="1">
        <text>4 Fe(2+) + O2 + 4 H(+) = 4 Fe(3+) + 2 H2O</text>
        <dbReference type="Rhea" id="RHEA:11148"/>
        <dbReference type="ChEBI" id="CHEBI:15377"/>
        <dbReference type="ChEBI" id="CHEBI:15378"/>
        <dbReference type="ChEBI" id="CHEBI:15379"/>
        <dbReference type="ChEBI" id="CHEBI:29033"/>
        <dbReference type="ChEBI" id="CHEBI:29034"/>
        <dbReference type="EC" id="1.16.3.1"/>
    </reaction>
</comment>
<comment type="subunit">
    <text evidence="1 2">Oligomer of 24 subunits. There are two types of subunits: L (light) chain and H (heavy) chain. The major chain can be light or heavy, depending on the species and tissue type. The functional molecule forms a roughly spherical shell with a diameter of 12 nm and contains a central cavity into which the insoluble mineral iron core is deposited. Interacts with NCOA4; NCOA4 promotes targeting of the iron-binding ferritin complex to autolysosomes following starvation or iron depletion (By similarity).</text>
</comment>
<comment type="subcellular location">
    <subcellularLocation>
        <location evidence="3">Cytoplasm</location>
    </subcellularLocation>
    <subcellularLocation>
        <location evidence="1">Lysosome</location>
    </subcellularLocation>
    <subcellularLocation>
        <location evidence="1">Cytoplasmic vesicle</location>
        <location evidence="1">Autophagosome</location>
    </subcellularLocation>
</comment>
<comment type="similarity">
    <text evidence="5">Belongs to the ferritin family.</text>
</comment>
<sequence length="171" mass="20063">MTTASPSQVRQNYHQDSEAAINRQINLELYASYVYLSMSYYFDRDDVALKNFAKYFLHQSHEEREHAERLMKLQNQRGARIFLQDIKKPDRDDWENGLNAMECALCLERSVNQSLLELHKLATEKNDPHLCDFIETHYLNEQVEAIKELGDHITNLRKMGALWIGHGRVPL</sequence>
<accession>P18685</accession>
<reference key="1">
    <citation type="journal article" date="1996" name="J. Neurosci. Res.">
        <title>Differential expression of the heavy-chain ferritin gene in non-adhered and adhered oligodendrocytes.</title>
        <authorList>
            <person name="Sanyal B."/>
            <person name="Polak P.E."/>
            <person name="Szuchet S."/>
        </authorList>
    </citation>
    <scope>NUCLEOTIDE SEQUENCE [MRNA]</scope>
    <source>
        <tissue>Brain</tissue>
    </source>
</reference>
<reference key="2">
    <citation type="journal article" date="1989" name="Arch. Biochem. Biophys.">
        <title>Crosslinks between intramolecular pairs of ferritin subunits: effects on both H and L subunits and on immunoreactivity of sheep spleen ferritin.</title>
        <authorList>
            <person name="McKenzie R.A."/>
            <person name="Yablonski M.J."/>
            <person name="Gillespie G.Y."/>
            <person name="Theil E.C."/>
        </authorList>
    </citation>
    <scope>PROTEIN SEQUENCE OF 72-102</scope>
</reference>
<evidence type="ECO:0000250" key="1">
    <source>
        <dbReference type="UniProtKB" id="P02794"/>
    </source>
</evidence>
<evidence type="ECO:0000250" key="2">
    <source>
        <dbReference type="UniProtKB" id="P09528"/>
    </source>
</evidence>
<evidence type="ECO:0000250" key="3">
    <source>
        <dbReference type="UniProtKB" id="P19130"/>
    </source>
</evidence>
<evidence type="ECO:0000255" key="4">
    <source>
        <dbReference type="PROSITE-ProRule" id="PRU00085"/>
    </source>
</evidence>
<evidence type="ECO:0000305" key="5"/>
<dbReference type="EC" id="1.16.3.1" evidence="1"/>
<dbReference type="EMBL" id="U54800">
    <property type="protein sequence ID" value="AAB19186.1"/>
    <property type="molecule type" value="mRNA"/>
</dbReference>
<dbReference type="SMR" id="P18685"/>
<dbReference type="STRING" id="9940.ENSOARP00000018968"/>
<dbReference type="PaxDb" id="9940-ENSOARP00000018968"/>
<dbReference type="eggNOG" id="KOG2332">
    <property type="taxonomic scope" value="Eukaryota"/>
</dbReference>
<dbReference type="Proteomes" id="UP000002356">
    <property type="component" value="Unplaced"/>
</dbReference>
<dbReference type="GO" id="GO:0005776">
    <property type="term" value="C:autophagosome"/>
    <property type="evidence" value="ECO:0007669"/>
    <property type="project" value="UniProtKB-SubCell"/>
</dbReference>
<dbReference type="GO" id="GO:0031410">
    <property type="term" value="C:cytoplasmic vesicle"/>
    <property type="evidence" value="ECO:0007669"/>
    <property type="project" value="UniProtKB-KW"/>
</dbReference>
<dbReference type="GO" id="GO:0005764">
    <property type="term" value="C:lysosome"/>
    <property type="evidence" value="ECO:0007669"/>
    <property type="project" value="UniProtKB-SubCell"/>
</dbReference>
<dbReference type="GO" id="GO:0008199">
    <property type="term" value="F:ferric iron binding"/>
    <property type="evidence" value="ECO:0007669"/>
    <property type="project" value="InterPro"/>
</dbReference>
<dbReference type="GO" id="GO:0008198">
    <property type="term" value="F:ferrous iron binding"/>
    <property type="evidence" value="ECO:0007669"/>
    <property type="project" value="TreeGrafter"/>
</dbReference>
<dbReference type="GO" id="GO:0004322">
    <property type="term" value="F:ferroxidase activity"/>
    <property type="evidence" value="ECO:0007669"/>
    <property type="project" value="UniProtKB-EC"/>
</dbReference>
<dbReference type="GO" id="GO:0006955">
    <property type="term" value="P:immune response"/>
    <property type="evidence" value="ECO:0000250"/>
    <property type="project" value="UniProtKB"/>
</dbReference>
<dbReference type="GO" id="GO:0006879">
    <property type="term" value="P:intracellular iron ion homeostasis"/>
    <property type="evidence" value="ECO:0007669"/>
    <property type="project" value="UniProtKB-KW"/>
</dbReference>
<dbReference type="GO" id="GO:0006826">
    <property type="term" value="P:iron ion transport"/>
    <property type="evidence" value="ECO:0007669"/>
    <property type="project" value="InterPro"/>
</dbReference>
<dbReference type="GO" id="GO:0008285">
    <property type="term" value="P:negative regulation of cell population proliferation"/>
    <property type="evidence" value="ECO:0000250"/>
    <property type="project" value="UniProtKB"/>
</dbReference>
<dbReference type="GO" id="GO:0110076">
    <property type="term" value="P:negative regulation of ferroptosis"/>
    <property type="evidence" value="ECO:0000250"/>
    <property type="project" value="UniProtKB"/>
</dbReference>
<dbReference type="CDD" id="cd01056">
    <property type="entry name" value="Euk_Ferritin"/>
    <property type="match status" value="1"/>
</dbReference>
<dbReference type="FunFam" id="1.20.1260.10:FF:000024">
    <property type="entry name" value="Ferritin heavy chain"/>
    <property type="match status" value="1"/>
</dbReference>
<dbReference type="Gene3D" id="1.20.1260.10">
    <property type="match status" value="1"/>
</dbReference>
<dbReference type="InterPro" id="IPR001519">
    <property type="entry name" value="Ferritin"/>
</dbReference>
<dbReference type="InterPro" id="IPR012347">
    <property type="entry name" value="Ferritin-like"/>
</dbReference>
<dbReference type="InterPro" id="IPR009040">
    <property type="entry name" value="Ferritin-like_diiron"/>
</dbReference>
<dbReference type="InterPro" id="IPR009078">
    <property type="entry name" value="Ferritin-like_SF"/>
</dbReference>
<dbReference type="InterPro" id="IPR014034">
    <property type="entry name" value="Ferritin_CS"/>
</dbReference>
<dbReference type="InterPro" id="IPR008331">
    <property type="entry name" value="Ferritin_DPS_dom"/>
</dbReference>
<dbReference type="PANTHER" id="PTHR11431">
    <property type="entry name" value="FERRITIN"/>
    <property type="match status" value="1"/>
</dbReference>
<dbReference type="PANTHER" id="PTHR11431:SF37">
    <property type="entry name" value="FERRITIN HEAVY CHAIN"/>
    <property type="match status" value="1"/>
</dbReference>
<dbReference type="Pfam" id="PF00210">
    <property type="entry name" value="Ferritin"/>
    <property type="match status" value="1"/>
</dbReference>
<dbReference type="SUPFAM" id="SSF47240">
    <property type="entry name" value="Ferritin-like"/>
    <property type="match status" value="1"/>
</dbReference>
<dbReference type="PROSITE" id="PS00204">
    <property type="entry name" value="FERRITIN_2"/>
    <property type="match status" value="1"/>
</dbReference>
<dbReference type="PROSITE" id="PS50905">
    <property type="entry name" value="FERRITIN_LIKE"/>
    <property type="match status" value="1"/>
</dbReference>